<keyword id="KW-1185">Reference proteome</keyword>
<feature type="chain" id="PRO_1000012988" description="UPF0145 protein CD630_17110">
    <location>
        <begin position="1"/>
        <end position="112"/>
    </location>
</feature>
<dbReference type="EMBL" id="AM180355">
    <property type="protein sequence ID" value="CAJ68579.1"/>
    <property type="molecule type" value="Genomic_DNA"/>
</dbReference>
<dbReference type="RefSeq" id="WP_003420397.1">
    <property type="nucleotide sequence ID" value="NZ_JAUPES010000035.1"/>
</dbReference>
<dbReference type="RefSeq" id="YP_001088215.1">
    <property type="nucleotide sequence ID" value="NC_009089.1"/>
</dbReference>
<dbReference type="SMR" id="Q186R7"/>
<dbReference type="EnsemblBacteria" id="CAJ68579">
    <property type="protein sequence ID" value="CAJ68579"/>
    <property type="gene ID" value="CD630_17110"/>
</dbReference>
<dbReference type="KEGG" id="cdf:CD630_17110"/>
<dbReference type="KEGG" id="pdc:CDIF630_01899"/>
<dbReference type="PATRIC" id="fig|272563.120.peg.1795"/>
<dbReference type="eggNOG" id="COG0393">
    <property type="taxonomic scope" value="Bacteria"/>
</dbReference>
<dbReference type="OrthoDB" id="9796448at2"/>
<dbReference type="PhylomeDB" id="Q186R7"/>
<dbReference type="BioCyc" id="PDIF272563:G12WB-1854-MONOMER"/>
<dbReference type="Proteomes" id="UP000001978">
    <property type="component" value="Chromosome"/>
</dbReference>
<dbReference type="Gene3D" id="3.30.110.70">
    <property type="entry name" value="Hypothetical protein apc22750. Chain B"/>
    <property type="match status" value="1"/>
</dbReference>
<dbReference type="HAMAP" id="MF_00338">
    <property type="entry name" value="UPF0145"/>
    <property type="match status" value="1"/>
</dbReference>
<dbReference type="InterPro" id="IPR035439">
    <property type="entry name" value="UPF0145_dom_sf"/>
</dbReference>
<dbReference type="InterPro" id="IPR002765">
    <property type="entry name" value="UPF0145_YbjQ-like"/>
</dbReference>
<dbReference type="PANTHER" id="PTHR34068:SF2">
    <property type="entry name" value="UPF0145 PROTEIN SCO3412"/>
    <property type="match status" value="1"/>
</dbReference>
<dbReference type="PANTHER" id="PTHR34068">
    <property type="entry name" value="UPF0145 PROTEIN YBJQ"/>
    <property type="match status" value="1"/>
</dbReference>
<dbReference type="Pfam" id="PF01906">
    <property type="entry name" value="YbjQ_1"/>
    <property type="match status" value="1"/>
</dbReference>
<dbReference type="SUPFAM" id="SSF117782">
    <property type="entry name" value="YbjQ-like"/>
    <property type="match status" value="1"/>
</dbReference>
<protein>
    <recommendedName>
        <fullName evidence="1">UPF0145 protein CD630_17110</fullName>
    </recommendedName>
</protein>
<sequence length="112" mass="11854">MLIVTTEKVEGKKISKVLGLVRGSTIRAKHVGKDIGASFKNLVGGELTGYNEMLTEARQIAIGRMVEDAEAKGANAVIAFRLSSASVMQGAAEMLAYGTAVVLEDDNSILEK</sequence>
<evidence type="ECO:0000255" key="1">
    <source>
        <dbReference type="HAMAP-Rule" id="MF_00338"/>
    </source>
</evidence>
<accession>Q186R7</accession>
<comment type="similarity">
    <text evidence="1">Belongs to the UPF0145 family.</text>
</comment>
<gene>
    <name type="ordered locus">CD630_17110</name>
</gene>
<name>Y1711_CLOD6</name>
<organism>
    <name type="scientific">Clostridioides difficile (strain 630)</name>
    <name type="common">Peptoclostridium difficile</name>
    <dbReference type="NCBI Taxonomy" id="272563"/>
    <lineage>
        <taxon>Bacteria</taxon>
        <taxon>Bacillati</taxon>
        <taxon>Bacillota</taxon>
        <taxon>Clostridia</taxon>
        <taxon>Peptostreptococcales</taxon>
        <taxon>Peptostreptococcaceae</taxon>
        <taxon>Clostridioides</taxon>
    </lineage>
</organism>
<proteinExistence type="inferred from homology"/>
<reference key="1">
    <citation type="journal article" date="2006" name="Nat. Genet.">
        <title>The multidrug-resistant human pathogen Clostridium difficile has a highly mobile, mosaic genome.</title>
        <authorList>
            <person name="Sebaihia M."/>
            <person name="Wren B.W."/>
            <person name="Mullany P."/>
            <person name="Fairweather N.F."/>
            <person name="Minton N."/>
            <person name="Stabler R."/>
            <person name="Thomson N.R."/>
            <person name="Roberts A.P."/>
            <person name="Cerdeno-Tarraga A.M."/>
            <person name="Wang H."/>
            <person name="Holden M.T.G."/>
            <person name="Wright A."/>
            <person name="Churcher C."/>
            <person name="Quail M.A."/>
            <person name="Baker S."/>
            <person name="Bason N."/>
            <person name="Brooks K."/>
            <person name="Chillingworth T."/>
            <person name="Cronin A."/>
            <person name="Davis P."/>
            <person name="Dowd L."/>
            <person name="Fraser A."/>
            <person name="Feltwell T."/>
            <person name="Hance Z."/>
            <person name="Holroyd S."/>
            <person name="Jagels K."/>
            <person name="Moule S."/>
            <person name="Mungall K."/>
            <person name="Price C."/>
            <person name="Rabbinowitsch E."/>
            <person name="Sharp S."/>
            <person name="Simmonds M."/>
            <person name="Stevens K."/>
            <person name="Unwin L."/>
            <person name="Whithead S."/>
            <person name="Dupuy B."/>
            <person name="Dougan G."/>
            <person name="Barrell B."/>
            <person name="Parkhill J."/>
        </authorList>
    </citation>
    <scope>NUCLEOTIDE SEQUENCE [LARGE SCALE GENOMIC DNA]</scope>
    <source>
        <strain>630</strain>
    </source>
</reference>